<name>LYAM3_MOUSE</name>
<sequence>MAGCPKGSWTPRLRSVILGGAQLIWFSALISELVNQKEVAAWTYNYSTKAYSWNNSRVFCRRHFTDLVAIQNKNEIAHLNDVIPFFNSYYWIGIRKINNKWTWVGTNKTLTEEAENWADNEPNNKKNNQDCVEIYIKSNSAPGKWNDEPCFKRKRALCYTASCQDMSCSNQGECIETIGSYTCSCYPGFYGPECEYVKECGKVNIPQHVLMNCSHPLGEFSFNSQCTFSCAEGYELDGPGELQCLASGIWTNNPPKCDAVQCQSLEAPPHGTMACMHPIAAFAYDSSCKFECQPGYRARGSNTLHCTGSGQWSEPLPTCEAIACEPPEIPIHGSMDCVPSTGTFGYNSSCTFLCAEGFVLKGNDAIQCADSGQWTAPAPFCEALQCPEFPVPSKAQVNCSDPFGTLTYQSVCSFSCDEGSLLVGASVIRCLATGHWNGAPPECQAVSCAPMLSPENGSMTCVQPLGNSTYKSTCQFMCDEGFYLSGPERLDCSPSGHWTGTPPTCEAIKCPGIFAPEQGNLDCSHVHGEFGVGSICHFSCNEDFELLGSENVECTVSGRWSAPPPTCKGITSLPAPAVRCPALTTPGQGTMSCQHHLGSFGPNTTCYFGCKTGFTLRGANSLRCRASGQWTAVTPMCRAVKCSELHMDTAVAMNCSNPWGNFSYGSTCTFQCPEGQSLNGSVRATCREDGHWSDAMPTCQAGTLTIQEALTYLGGAVASTTGLAVGGTLLALLRKRLRKKDDGKCPLNPHSHLGTYGVFTNAAYDPTP</sequence>
<proteinExistence type="evidence at protein level"/>
<gene>
    <name type="primary">Selp</name>
    <name type="synonym">Grmp</name>
</gene>
<keyword id="KW-0002">3D-structure</keyword>
<keyword id="KW-0106">Calcium</keyword>
<keyword id="KW-0130">Cell adhesion</keyword>
<keyword id="KW-1003">Cell membrane</keyword>
<keyword id="KW-1015">Disulfide bond</keyword>
<keyword id="KW-0245">EGF-like domain</keyword>
<keyword id="KW-0325">Glycoprotein</keyword>
<keyword id="KW-0430">Lectin</keyword>
<keyword id="KW-0449">Lipoprotein</keyword>
<keyword id="KW-0472">Membrane</keyword>
<keyword id="KW-0479">Metal-binding</keyword>
<keyword id="KW-0564">Palmitate</keyword>
<keyword id="KW-1185">Reference proteome</keyword>
<keyword id="KW-0677">Repeat</keyword>
<keyword id="KW-0732">Signal</keyword>
<keyword id="KW-0768">Sushi</keyword>
<keyword id="KW-0812">Transmembrane</keyword>
<keyword id="KW-1133">Transmembrane helix</keyword>
<accession>Q01102</accession>
<accession>Q32MF1</accession>
<reference key="1">
    <citation type="journal article" date="1992" name="J. Biol. Chem.">
        <title>Cloning of the mouse endothelial selectins. Expression of both E- and P-selectin is inducible by tumor necrosis factor alpha.</title>
        <authorList>
            <person name="Weller A."/>
            <person name="Isenmann S."/>
            <person name="Vestweber D."/>
        </authorList>
    </citation>
    <scope>NUCLEOTIDE SEQUENCE [MRNA]</scope>
    <scope>INDUCTION</scope>
</reference>
<reference key="2">
    <citation type="journal article" date="1992" name="Blood">
        <title>Molecular cloning and analysis of in vivo expression of murine P-selectin.</title>
        <authorList>
            <person name="Sanders W.E. Jr."/>
            <person name="Wilson R.W."/>
            <person name="Ballantyne C.M."/>
            <person name="Beaudet A.L."/>
        </authorList>
    </citation>
    <scope>NUCLEOTIDE SEQUENCE [MRNA]</scope>
    <scope>INDUCTION</scope>
</reference>
<reference key="3">
    <citation type="journal article" date="2004" name="Genome Res.">
        <title>The status, quality, and expansion of the NIH full-length cDNA project: the Mammalian Gene Collection (MGC).</title>
        <authorList>
            <consortium name="The MGC Project Team"/>
        </authorList>
    </citation>
    <scope>NUCLEOTIDE SEQUENCE [LARGE SCALE MRNA]</scope>
</reference>
<reference key="4">
    <citation type="journal article" date="2002" name="J. Immunol.">
        <title>P-, E-, and L-selectin mediate migration of activated CD8+ T lymphocytes into inflamed skin.</title>
        <authorList>
            <person name="Hirata T."/>
            <person name="Furie B.C."/>
            <person name="Furie B."/>
        </authorList>
    </citation>
    <scope>FUNCTION</scope>
</reference>
<reference key="5">
    <citation type="journal article" date="2003" name="Blood">
        <title>N-terminal residues in murine P-selectin glycoprotein ligand-1 required for binding to murine P-selectin.</title>
        <authorList>
            <person name="Xia L."/>
            <person name="Ramachandran V."/>
            <person name="McDaniel J.M."/>
            <person name="Nguyen K.N."/>
            <person name="Cummings R.D."/>
            <person name="McEver R.P."/>
        </authorList>
    </citation>
    <scope>INTERACTION WITH SELPLG</scope>
</reference>
<organism>
    <name type="scientific">Mus musculus</name>
    <name type="common">Mouse</name>
    <dbReference type="NCBI Taxonomy" id="10090"/>
    <lineage>
        <taxon>Eukaryota</taxon>
        <taxon>Metazoa</taxon>
        <taxon>Chordata</taxon>
        <taxon>Craniata</taxon>
        <taxon>Vertebrata</taxon>
        <taxon>Euteleostomi</taxon>
        <taxon>Mammalia</taxon>
        <taxon>Eutheria</taxon>
        <taxon>Euarchontoglires</taxon>
        <taxon>Glires</taxon>
        <taxon>Rodentia</taxon>
        <taxon>Myomorpha</taxon>
        <taxon>Muroidea</taxon>
        <taxon>Muridae</taxon>
        <taxon>Murinae</taxon>
        <taxon>Mus</taxon>
        <taxon>Mus</taxon>
    </lineage>
</organism>
<comment type="function">
    <text evidence="2 7">Ca(2+)-dependent receptor for myeloid cells that binds to carbohydrates on neutrophils and monocytes. Mediates the interaction of activated endothelial cells or platelets with leukocytes. The ligand recognized is sialyl-Lewis X. Mediates rapid rolling of leukocyte rolling over vascular surfaces during the initial steps in inflammation through interaction with SELPLG. Mediates cell-cell interactions and cell adhesion via the interaction with integrin alpha-IIb/beta3 (ITGA2B:ITGB3) and integrin alpha-V/beta-3 (ITGAV:ITGB3) (By similarity).</text>
</comment>
<comment type="subunit">
    <text evidence="2 8">Interacts with SNX17. Interacts with SELPLG/PSGL1 and PODXL2 and mediates neutrophil adhesion and leukocyte rolling. This interaction requires the sialyl-Lewis X epitope of SELPLG and PODXL2, and specific tyrosine sulfation on SELPLG. Interacts (via C-type lectin domain) with alpha-IIb/beta3 integrin ITGA2B:ITGB3 and alpha-V/beta-3 integrin ITGAV:ITGB3 (By similarity). Interacts with alpha5/beta1 integrin ITGA5:ITGB1 and alpha4/beta1 integrin ITGA4:ITGB (By similarity).</text>
</comment>
<comment type="subcellular location">
    <subcellularLocation>
        <location evidence="2">Cell membrane</location>
        <topology evidence="2">Single-pass type I membrane protein</topology>
    </subcellularLocation>
</comment>
<comment type="tissue specificity">
    <text>Stored in the alpha-granules of platelets and Weibel-Palade bodies of endothelial cells. Upon cell activation by agonists, P-selectin is transported rapidly to the cell surface.</text>
</comment>
<comment type="induction">
    <text evidence="9 10">By TNF-alpha. Induced expression in lung, liver, kidney and heart after endotoxin treatment.</text>
</comment>
<comment type="domain">
    <text evidence="2">The C-type lectin domain is required for binding to integrins (By similarity). Binding to soluble integrins alpha-V/beta-3 (ITGAV:ITGB3) and alpha-IIb/beta3 (ITGA2B:ITGB) is cation-dependent (By similarity). Binds to the allosteric site (site 2) of integrins and activates them (By similarity). The interaction with integrins may mediate cell-cell interactions and cell adhesion (By similarity).</text>
</comment>
<comment type="similarity">
    <text evidence="11">Belongs to the selectin/LECAM family.</text>
</comment>
<comment type="online information" name="Functional Glycomics Gateway - Glycan Binding">
    <link uri="http://www.functionalglycomics.org/glycomics/GBPServlet?&amp;operationType=view&amp;cbpId=cbp_mou_Ctlect_284"/>
    <text>P-selectin</text>
</comment>
<dbReference type="EMBL" id="M87861">
    <property type="protein sequence ID" value="AAA40008.1"/>
    <property type="molecule type" value="mRNA"/>
</dbReference>
<dbReference type="EMBL" id="M72332">
    <property type="protein sequence ID" value="AAA37712.1"/>
    <property type="molecule type" value="mRNA"/>
</dbReference>
<dbReference type="EMBL" id="BC109158">
    <property type="protein sequence ID" value="AAI09159.1"/>
    <property type="molecule type" value="mRNA"/>
</dbReference>
<dbReference type="EMBL" id="BC109159">
    <property type="protein sequence ID" value="AAI09160.1"/>
    <property type="molecule type" value="mRNA"/>
</dbReference>
<dbReference type="CCDS" id="CCDS48422.1"/>
<dbReference type="PIR" id="A42755">
    <property type="entry name" value="A42755"/>
</dbReference>
<dbReference type="RefSeq" id="NP_035477.1">
    <property type="nucleotide sequence ID" value="NM_011347.2"/>
</dbReference>
<dbReference type="PDB" id="4GXB">
    <property type="method" value="X-ray"/>
    <property type="resolution" value="1.80 A"/>
    <property type="chains" value="B=735-768"/>
</dbReference>
<dbReference type="PDBsum" id="4GXB"/>
<dbReference type="SMR" id="Q01102"/>
<dbReference type="CORUM" id="Q01102"/>
<dbReference type="FunCoup" id="Q01102">
    <property type="interactions" value="222"/>
</dbReference>
<dbReference type="STRING" id="10090.ENSMUSP00000123924"/>
<dbReference type="BindingDB" id="Q01102"/>
<dbReference type="ChEMBL" id="CHEMBL2455"/>
<dbReference type="GlyCosmos" id="Q01102">
    <property type="glycosylation" value="5 sites, No reported glycans"/>
</dbReference>
<dbReference type="GlyGen" id="Q01102">
    <property type="glycosylation" value="6 sites"/>
</dbReference>
<dbReference type="iPTMnet" id="Q01102"/>
<dbReference type="PhosphoSitePlus" id="Q01102"/>
<dbReference type="SwissPalm" id="Q01102"/>
<dbReference type="CPTAC" id="non-CPTAC-3590"/>
<dbReference type="PaxDb" id="10090-ENSMUSP00000123924"/>
<dbReference type="PeptideAtlas" id="Q01102"/>
<dbReference type="ProteomicsDB" id="291976"/>
<dbReference type="Antibodypedia" id="794">
    <property type="antibodies" value="1300 antibodies from 45 providers"/>
</dbReference>
<dbReference type="DNASU" id="20344"/>
<dbReference type="Ensembl" id="ENSMUST00000162746.2">
    <property type="protein sequence ID" value="ENSMUSP00000123924.2"/>
    <property type="gene ID" value="ENSMUSG00000026580.17"/>
</dbReference>
<dbReference type="GeneID" id="20344"/>
<dbReference type="KEGG" id="mmu:20344"/>
<dbReference type="UCSC" id="uc007dhz.2">
    <property type="organism name" value="mouse"/>
</dbReference>
<dbReference type="AGR" id="MGI:98280"/>
<dbReference type="CTD" id="6403"/>
<dbReference type="MGI" id="MGI:98280">
    <property type="gene designation" value="Selp"/>
</dbReference>
<dbReference type="VEuPathDB" id="HostDB:ENSMUSG00000026580"/>
<dbReference type="eggNOG" id="KOG4297">
    <property type="taxonomic scope" value="Eukaryota"/>
</dbReference>
<dbReference type="GeneTree" id="ENSGT00940000161063"/>
<dbReference type="HOGENOM" id="CLU_020848_0_0_1"/>
<dbReference type="InParanoid" id="Q01102"/>
<dbReference type="OMA" id="DWCPEPP"/>
<dbReference type="OrthoDB" id="406096at2759"/>
<dbReference type="PhylomeDB" id="Q01102"/>
<dbReference type="TreeFam" id="TF326910"/>
<dbReference type="Reactome" id="R-MMU-114608">
    <property type="pathway name" value="Platelet degranulation"/>
</dbReference>
<dbReference type="Reactome" id="R-MMU-202733">
    <property type="pathway name" value="Cell surface interactions at the vascular wall"/>
</dbReference>
<dbReference type="BioGRID-ORCS" id="20344">
    <property type="hits" value="0 hits in 79 CRISPR screens"/>
</dbReference>
<dbReference type="PRO" id="PR:Q01102"/>
<dbReference type="Proteomes" id="UP000000589">
    <property type="component" value="Chromosome 1"/>
</dbReference>
<dbReference type="RNAct" id="Q01102">
    <property type="molecule type" value="protein"/>
</dbReference>
<dbReference type="Bgee" id="ENSMUSG00000026580">
    <property type="expression patterns" value="Expressed in endothelial cell of lymphatic vessel and 85 other cell types or tissues"/>
</dbReference>
<dbReference type="ExpressionAtlas" id="Q01102">
    <property type="expression patterns" value="baseline and differential"/>
</dbReference>
<dbReference type="GO" id="GO:0009897">
    <property type="term" value="C:external side of plasma membrane"/>
    <property type="evidence" value="ECO:0000314"/>
    <property type="project" value="MGI"/>
</dbReference>
<dbReference type="GO" id="GO:0005615">
    <property type="term" value="C:extracellular space"/>
    <property type="evidence" value="ECO:0007669"/>
    <property type="project" value="Ensembl"/>
</dbReference>
<dbReference type="GO" id="GO:0016020">
    <property type="term" value="C:membrane"/>
    <property type="evidence" value="ECO:0000314"/>
    <property type="project" value="MGI"/>
</dbReference>
<dbReference type="GO" id="GO:0005886">
    <property type="term" value="C:plasma membrane"/>
    <property type="evidence" value="ECO:0000250"/>
    <property type="project" value="UniProtKB"/>
</dbReference>
<dbReference type="GO" id="GO:0031092">
    <property type="term" value="C:platelet alpha granule membrane"/>
    <property type="evidence" value="ECO:0000266"/>
    <property type="project" value="MGI"/>
</dbReference>
<dbReference type="GO" id="GO:0005509">
    <property type="term" value="F:calcium ion binding"/>
    <property type="evidence" value="ECO:0000250"/>
    <property type="project" value="UniProtKB"/>
</dbReference>
<dbReference type="GO" id="GO:0048306">
    <property type="term" value="F:calcium-dependent protein binding"/>
    <property type="evidence" value="ECO:0000314"/>
    <property type="project" value="MGI"/>
</dbReference>
<dbReference type="GO" id="GO:0042806">
    <property type="term" value="F:fucose binding"/>
    <property type="evidence" value="ECO:0007669"/>
    <property type="project" value="Ensembl"/>
</dbReference>
<dbReference type="GO" id="GO:0008201">
    <property type="term" value="F:heparin binding"/>
    <property type="evidence" value="ECO:0007669"/>
    <property type="project" value="Ensembl"/>
</dbReference>
<dbReference type="GO" id="GO:0005178">
    <property type="term" value="F:integrin binding"/>
    <property type="evidence" value="ECO:0000250"/>
    <property type="project" value="UniProtKB"/>
</dbReference>
<dbReference type="GO" id="GO:0001530">
    <property type="term" value="F:lipopolysaccharide binding"/>
    <property type="evidence" value="ECO:0007669"/>
    <property type="project" value="Ensembl"/>
</dbReference>
<dbReference type="GO" id="GO:0070492">
    <property type="term" value="F:oligosaccharide binding"/>
    <property type="evidence" value="ECO:0000250"/>
    <property type="project" value="UniProtKB"/>
</dbReference>
<dbReference type="GO" id="GO:0033691">
    <property type="term" value="F:sialic acid binding"/>
    <property type="evidence" value="ECO:0000314"/>
    <property type="project" value="MGI"/>
</dbReference>
<dbReference type="GO" id="GO:0016339">
    <property type="term" value="P:calcium-dependent cell-cell adhesion via plasma membrane cell adhesion molecules"/>
    <property type="evidence" value="ECO:0000250"/>
    <property type="project" value="UniProtKB"/>
</dbReference>
<dbReference type="GO" id="GO:0098609">
    <property type="term" value="P:cell-cell adhesion"/>
    <property type="evidence" value="ECO:0000250"/>
    <property type="project" value="UniProtKB"/>
</dbReference>
<dbReference type="GO" id="GO:0071354">
    <property type="term" value="P:cellular response to interleukin-6"/>
    <property type="evidence" value="ECO:0000266"/>
    <property type="project" value="MGI"/>
</dbReference>
<dbReference type="GO" id="GO:0007157">
    <property type="term" value="P:heterophilic cell-cell adhesion via plasma membrane cell adhesion molecules"/>
    <property type="evidence" value="ECO:0000315"/>
    <property type="project" value="MGI"/>
</dbReference>
<dbReference type="GO" id="GO:0006954">
    <property type="term" value="P:inflammatory response"/>
    <property type="evidence" value="ECO:0000315"/>
    <property type="project" value="MGI"/>
</dbReference>
<dbReference type="GO" id="GO:0007159">
    <property type="term" value="P:leukocyte cell-cell adhesion"/>
    <property type="evidence" value="ECO:0000315"/>
    <property type="project" value="MGI"/>
</dbReference>
<dbReference type="GO" id="GO:0050900">
    <property type="term" value="P:leukocyte migration"/>
    <property type="evidence" value="ECO:0000315"/>
    <property type="project" value="MGI"/>
</dbReference>
<dbReference type="GO" id="GO:0050901">
    <property type="term" value="P:leukocyte tethering or rolling"/>
    <property type="evidence" value="ECO:0000315"/>
    <property type="project" value="MGI"/>
</dbReference>
<dbReference type="GO" id="GO:0002687">
    <property type="term" value="P:positive regulation of leukocyte migration"/>
    <property type="evidence" value="ECO:0000315"/>
    <property type="project" value="MGI"/>
</dbReference>
<dbReference type="GO" id="GO:1903238">
    <property type="term" value="P:positive regulation of leukocyte tethering or rolling"/>
    <property type="evidence" value="ECO:0000315"/>
    <property type="project" value="UniProtKB"/>
</dbReference>
<dbReference type="GO" id="GO:0051897">
    <property type="term" value="P:positive regulation of phosphatidylinositol 3-kinase/protein kinase B signal transduction"/>
    <property type="evidence" value="ECO:0000250"/>
    <property type="project" value="UniProtKB"/>
</dbReference>
<dbReference type="GO" id="GO:0010572">
    <property type="term" value="P:positive regulation of platelet activation"/>
    <property type="evidence" value="ECO:0000315"/>
    <property type="project" value="BHF-UCL"/>
</dbReference>
<dbReference type="GO" id="GO:0033623">
    <property type="term" value="P:regulation of integrin activation"/>
    <property type="evidence" value="ECO:0000250"/>
    <property type="project" value="UniProtKB"/>
</dbReference>
<dbReference type="CDD" id="cd00033">
    <property type="entry name" value="CCP"/>
    <property type="match status" value="8"/>
</dbReference>
<dbReference type="CDD" id="cd03592">
    <property type="entry name" value="CLECT_selectins_like"/>
    <property type="match status" value="1"/>
</dbReference>
<dbReference type="CDD" id="cd00054">
    <property type="entry name" value="EGF_CA"/>
    <property type="match status" value="1"/>
</dbReference>
<dbReference type="FunFam" id="3.10.100.10:FF:000007">
    <property type="entry name" value="L-selectin"/>
    <property type="match status" value="1"/>
</dbReference>
<dbReference type="FunFam" id="2.10.25.10:FF:000176">
    <property type="entry name" value="Selectin P"/>
    <property type="match status" value="1"/>
</dbReference>
<dbReference type="FunFam" id="2.10.70.10:FF:000001">
    <property type="entry name" value="Selectin P"/>
    <property type="match status" value="8"/>
</dbReference>
<dbReference type="Gene3D" id="2.10.70.10">
    <property type="entry name" value="Complement Module, domain 1"/>
    <property type="match status" value="8"/>
</dbReference>
<dbReference type="Gene3D" id="2.10.25.10">
    <property type="entry name" value="Laminin"/>
    <property type="match status" value="1"/>
</dbReference>
<dbReference type="Gene3D" id="3.10.100.10">
    <property type="entry name" value="Mannose-Binding Protein A, subunit A"/>
    <property type="match status" value="1"/>
</dbReference>
<dbReference type="InterPro" id="IPR001304">
    <property type="entry name" value="C-type_lectin-like"/>
</dbReference>
<dbReference type="InterPro" id="IPR016186">
    <property type="entry name" value="C-type_lectin-like/link_sf"/>
</dbReference>
<dbReference type="InterPro" id="IPR018378">
    <property type="entry name" value="C-type_lectin_CS"/>
</dbReference>
<dbReference type="InterPro" id="IPR050350">
    <property type="entry name" value="Compl-Cell_Adhes-Reg"/>
</dbReference>
<dbReference type="InterPro" id="IPR016187">
    <property type="entry name" value="CTDL_fold"/>
</dbReference>
<dbReference type="InterPro" id="IPR001881">
    <property type="entry name" value="EGF-like_Ca-bd_dom"/>
</dbReference>
<dbReference type="InterPro" id="IPR000742">
    <property type="entry name" value="EGF-like_dom"/>
</dbReference>
<dbReference type="InterPro" id="IPR033991">
    <property type="entry name" value="Selectin_CTLD"/>
</dbReference>
<dbReference type="InterPro" id="IPR002396">
    <property type="entry name" value="Selectin_superfamily"/>
</dbReference>
<dbReference type="InterPro" id="IPR035976">
    <property type="entry name" value="Sushi/SCR/CCP_sf"/>
</dbReference>
<dbReference type="InterPro" id="IPR000436">
    <property type="entry name" value="Sushi_SCR_CCP_dom"/>
</dbReference>
<dbReference type="PANTHER" id="PTHR19325">
    <property type="entry name" value="COMPLEMENT COMPONENT-RELATED SUSHI DOMAIN-CONTAINING"/>
    <property type="match status" value="1"/>
</dbReference>
<dbReference type="PANTHER" id="PTHR19325:SF493">
    <property type="entry name" value="E-SELECTIN"/>
    <property type="match status" value="1"/>
</dbReference>
<dbReference type="Pfam" id="PF00008">
    <property type="entry name" value="EGF"/>
    <property type="match status" value="1"/>
</dbReference>
<dbReference type="Pfam" id="PF00059">
    <property type="entry name" value="Lectin_C"/>
    <property type="match status" value="1"/>
</dbReference>
<dbReference type="Pfam" id="PF00084">
    <property type="entry name" value="Sushi"/>
    <property type="match status" value="8"/>
</dbReference>
<dbReference type="PRINTS" id="PR00343">
    <property type="entry name" value="SELECTIN"/>
</dbReference>
<dbReference type="SMART" id="SM00032">
    <property type="entry name" value="CCP"/>
    <property type="match status" value="8"/>
</dbReference>
<dbReference type="SMART" id="SM00034">
    <property type="entry name" value="CLECT"/>
    <property type="match status" value="1"/>
</dbReference>
<dbReference type="SMART" id="SM00181">
    <property type="entry name" value="EGF"/>
    <property type="match status" value="1"/>
</dbReference>
<dbReference type="SMART" id="SM00179">
    <property type="entry name" value="EGF_CA"/>
    <property type="match status" value="1"/>
</dbReference>
<dbReference type="SUPFAM" id="SSF56436">
    <property type="entry name" value="C-type lectin-like"/>
    <property type="match status" value="1"/>
</dbReference>
<dbReference type="SUPFAM" id="SSF57535">
    <property type="entry name" value="Complement control module/SCR domain"/>
    <property type="match status" value="8"/>
</dbReference>
<dbReference type="SUPFAM" id="SSF57196">
    <property type="entry name" value="EGF/Laminin"/>
    <property type="match status" value="1"/>
</dbReference>
<dbReference type="PROSITE" id="PS00615">
    <property type="entry name" value="C_TYPE_LECTIN_1"/>
    <property type="match status" value="1"/>
</dbReference>
<dbReference type="PROSITE" id="PS50041">
    <property type="entry name" value="C_TYPE_LECTIN_2"/>
    <property type="match status" value="1"/>
</dbReference>
<dbReference type="PROSITE" id="PS00022">
    <property type="entry name" value="EGF_1"/>
    <property type="match status" value="1"/>
</dbReference>
<dbReference type="PROSITE" id="PS01186">
    <property type="entry name" value="EGF_2"/>
    <property type="match status" value="1"/>
</dbReference>
<dbReference type="PROSITE" id="PS50026">
    <property type="entry name" value="EGF_3"/>
    <property type="match status" value="1"/>
</dbReference>
<dbReference type="PROSITE" id="PS50923">
    <property type="entry name" value="SUSHI"/>
    <property type="match status" value="8"/>
</dbReference>
<protein>
    <recommendedName>
        <fullName>P-selectin</fullName>
    </recommendedName>
    <alternativeName>
        <fullName>CD62 antigen-like family member P</fullName>
    </alternativeName>
    <alternativeName>
        <fullName>Granule membrane protein 140</fullName>
        <shortName>GMP-140</shortName>
    </alternativeName>
    <alternativeName>
        <fullName>Leukocyte-endothelial cell adhesion molecule 3</fullName>
        <shortName>LECAM3</shortName>
    </alternativeName>
    <alternativeName>
        <fullName>Platelet activation dependent granule-external membrane protein</fullName>
        <shortName>PADGEM</shortName>
    </alternativeName>
    <cdAntigenName>CD62P</cdAntigenName>
</protein>
<evidence type="ECO:0000250" key="1"/>
<evidence type="ECO:0000250" key="2">
    <source>
        <dbReference type="UniProtKB" id="P16109"/>
    </source>
</evidence>
<evidence type="ECO:0000255" key="3"/>
<evidence type="ECO:0000255" key="4">
    <source>
        <dbReference type="PROSITE-ProRule" id="PRU00040"/>
    </source>
</evidence>
<evidence type="ECO:0000255" key="5">
    <source>
        <dbReference type="PROSITE-ProRule" id="PRU00076"/>
    </source>
</evidence>
<evidence type="ECO:0000255" key="6">
    <source>
        <dbReference type="PROSITE-ProRule" id="PRU00302"/>
    </source>
</evidence>
<evidence type="ECO:0000269" key="7">
    <source>
    </source>
</evidence>
<evidence type="ECO:0000269" key="8">
    <source>
    </source>
</evidence>
<evidence type="ECO:0000269" key="9">
    <source>
    </source>
</evidence>
<evidence type="ECO:0000269" key="10">
    <source>
    </source>
</evidence>
<evidence type="ECO:0000305" key="11"/>
<evidence type="ECO:0007829" key="12">
    <source>
        <dbReference type="PDB" id="4GXB"/>
    </source>
</evidence>
<feature type="signal peptide" evidence="3">
    <location>
        <begin position="1"/>
        <end position="41"/>
    </location>
</feature>
<feature type="chain" id="PRO_0000017499" description="P-selectin">
    <location>
        <begin position="42"/>
        <end position="768"/>
    </location>
</feature>
<feature type="topological domain" description="Extracellular" evidence="3">
    <location>
        <begin position="42"/>
        <end position="709"/>
    </location>
</feature>
<feature type="transmembrane region" description="Helical" evidence="3">
    <location>
        <begin position="710"/>
        <end position="733"/>
    </location>
</feature>
<feature type="topological domain" description="Cytoplasmic" evidence="3">
    <location>
        <begin position="734"/>
        <end position="768"/>
    </location>
</feature>
<feature type="domain" description="C-type lectin" evidence="4">
    <location>
        <begin position="58"/>
        <end position="158"/>
    </location>
</feature>
<feature type="domain" description="EGF-like" evidence="5">
    <location>
        <begin position="159"/>
        <end position="195"/>
    </location>
</feature>
<feature type="domain" description="Sushi 1" evidence="6">
    <location>
        <begin position="198"/>
        <end position="259"/>
    </location>
</feature>
<feature type="domain" description="Sushi 2" evidence="6">
    <location>
        <begin position="260"/>
        <end position="321"/>
    </location>
</feature>
<feature type="domain" description="Sushi 3" evidence="6">
    <location>
        <begin position="322"/>
        <end position="383"/>
    </location>
</feature>
<feature type="domain" description="Sushi 4" evidence="6">
    <location>
        <begin position="384"/>
        <end position="445"/>
    </location>
</feature>
<feature type="domain" description="Sushi 5" evidence="6">
    <location>
        <begin position="446"/>
        <end position="507"/>
    </location>
</feature>
<feature type="domain" description="Sushi 6" evidence="6">
    <location>
        <begin position="508"/>
        <end position="569"/>
    </location>
</feature>
<feature type="domain" description="Sushi 7" evidence="6">
    <location>
        <begin position="578"/>
        <end position="639"/>
    </location>
</feature>
<feature type="domain" description="Sushi 8" evidence="6">
    <location>
        <begin position="640"/>
        <end position="701"/>
    </location>
</feature>
<feature type="region of interest" description="Interaction with SNX17" evidence="1">
    <location>
        <begin position="759"/>
        <end position="768"/>
    </location>
</feature>
<feature type="short sequence motif" description="Endocytosis signal" evidence="11">
    <location>
        <begin position="756"/>
        <end position="759"/>
    </location>
</feature>
<feature type="binding site" evidence="2">
    <location>
        <position position="121"/>
    </location>
    <ligand>
        <name>Ca(2+)</name>
        <dbReference type="ChEBI" id="CHEBI:29108"/>
    </ligand>
</feature>
<feature type="binding site" evidence="2">
    <location>
        <position position="123"/>
    </location>
    <ligand>
        <name>a carbohydrate</name>
        <dbReference type="ChEBI" id="CHEBI:16646"/>
    </ligand>
</feature>
<feature type="binding site" evidence="2">
    <location>
        <position position="123"/>
    </location>
    <ligand>
        <name>Ca(2+)</name>
        <dbReference type="ChEBI" id="CHEBI:29108"/>
    </ligand>
</feature>
<feature type="binding site" evidence="2">
    <location>
        <position position="124"/>
    </location>
    <ligand>
        <name>Ca(2+)</name>
        <dbReference type="ChEBI" id="CHEBI:29108"/>
    </ligand>
</feature>
<feature type="binding site" evidence="2">
    <location>
        <position position="133"/>
    </location>
    <ligand>
        <name>a carbohydrate</name>
        <dbReference type="ChEBI" id="CHEBI:16646"/>
    </ligand>
</feature>
<feature type="binding site" evidence="2">
    <location>
        <position position="146"/>
    </location>
    <ligand>
        <name>a carbohydrate</name>
        <dbReference type="ChEBI" id="CHEBI:16646"/>
    </ligand>
</feature>
<feature type="binding site" evidence="2">
    <location>
        <position position="146"/>
    </location>
    <ligand>
        <name>Ca(2+)</name>
        <dbReference type="ChEBI" id="CHEBI:29108"/>
    </ligand>
</feature>
<feature type="binding site" evidence="2">
    <location>
        <position position="147"/>
    </location>
    <ligand>
        <name>Ca(2+)</name>
        <dbReference type="ChEBI" id="CHEBI:29108"/>
    </ligand>
</feature>
<feature type="lipid moiety-binding region" description="S-palmitoyl cysteine; alternate" evidence="2">
    <location>
        <position position="745"/>
    </location>
</feature>
<feature type="lipid moiety-binding region" description="S-stearoyl cysteine; alternate" evidence="2">
    <location>
        <position position="745"/>
    </location>
</feature>
<feature type="glycosylation site" description="N-linked (GlcNAc...) asparagine" evidence="3">
    <location>
        <position position="398"/>
    </location>
</feature>
<feature type="glycosylation site" description="N-linked (GlcNAc...) asparagine" evidence="3">
    <location>
        <position position="603"/>
    </location>
</feature>
<feature type="glycosylation site" description="N-linked (GlcNAc...) asparagine" evidence="3">
    <location>
        <position position="654"/>
    </location>
</feature>
<feature type="glycosylation site" description="N-linked (GlcNAc...) asparagine" evidence="3">
    <location>
        <position position="661"/>
    </location>
</feature>
<feature type="glycosylation site" description="N-linked (GlcNAc...) asparagine" evidence="3">
    <location>
        <position position="679"/>
    </location>
</feature>
<feature type="disulfide bond" evidence="2">
    <location>
        <begin position="60"/>
        <end position="158"/>
    </location>
</feature>
<feature type="disulfide bond" evidence="2">
    <location>
        <begin position="131"/>
        <end position="150"/>
    </location>
</feature>
<feature type="disulfide bond" evidence="2">
    <location>
        <begin position="163"/>
        <end position="174"/>
    </location>
</feature>
<feature type="disulfide bond" evidence="2">
    <location>
        <begin position="168"/>
        <end position="183"/>
    </location>
</feature>
<feature type="disulfide bond" evidence="2">
    <location>
        <begin position="185"/>
        <end position="194"/>
    </location>
</feature>
<feature type="disulfide bond" evidence="1">
    <location>
        <begin position="200"/>
        <end position="244"/>
    </location>
</feature>
<feature type="disulfide bond" evidence="1">
    <location>
        <begin position="230"/>
        <end position="257"/>
    </location>
</feature>
<feature type="disulfide bond" evidence="1">
    <location>
        <begin position="262"/>
        <end position="306"/>
    </location>
</feature>
<feature type="disulfide bond" evidence="1">
    <location>
        <begin position="292"/>
        <end position="319"/>
    </location>
</feature>
<feature type="disulfide bond" evidence="1">
    <location>
        <begin position="324"/>
        <end position="368"/>
    </location>
</feature>
<feature type="disulfide bond" evidence="1">
    <location>
        <begin position="354"/>
        <end position="381"/>
    </location>
</feature>
<feature type="disulfide bond" evidence="1">
    <location>
        <begin position="386"/>
        <end position="430"/>
    </location>
</feature>
<feature type="disulfide bond" evidence="1">
    <location>
        <begin position="416"/>
        <end position="443"/>
    </location>
</feature>
<feature type="disulfide bond" evidence="1">
    <location>
        <begin position="448"/>
        <end position="492"/>
    </location>
</feature>
<feature type="disulfide bond" evidence="1">
    <location>
        <begin position="478"/>
        <end position="505"/>
    </location>
</feature>
<feature type="disulfide bond" evidence="1">
    <location>
        <begin position="510"/>
        <end position="554"/>
    </location>
</feature>
<feature type="disulfide bond" evidence="1">
    <location>
        <begin position="540"/>
        <end position="567"/>
    </location>
</feature>
<feature type="disulfide bond" evidence="1">
    <location>
        <begin position="580"/>
        <end position="624"/>
    </location>
</feature>
<feature type="disulfide bond" evidence="1">
    <location>
        <begin position="610"/>
        <end position="637"/>
    </location>
</feature>
<feature type="disulfide bond" evidence="1">
    <location>
        <begin position="642"/>
        <end position="686"/>
    </location>
</feature>
<feature type="disulfide bond" evidence="1">
    <location>
        <begin position="672"/>
        <end position="699"/>
    </location>
</feature>
<feature type="sequence conflict" description="In Ref. 2; AAA37712." evidence="11" ref="2">
    <original>A</original>
    <variation>E</variation>
    <location>
        <position position="724"/>
    </location>
</feature>
<feature type="strand" evidence="12">
    <location>
        <begin position="756"/>
        <end position="760"/>
    </location>
</feature>